<keyword id="KW-0472">Membrane</keyword>
<keyword id="KW-0479">Metal-binding</keyword>
<keyword id="KW-1185">Reference proteome</keyword>
<keyword id="KW-0808">Transferase</keyword>
<keyword id="KW-0812">Transmembrane</keyword>
<keyword id="KW-1133">Transmembrane helix</keyword>
<keyword id="KW-0833">Ubl conjugation pathway</keyword>
<keyword id="KW-0862">Zinc</keyword>
<keyword id="KW-0863">Zinc-finger</keyword>
<accession>Q8LC69</accession>
<accession>Q9S783</accession>
<feature type="chain" id="PRO_0000055774" description="RING-H2 finger protein ATL8">
    <location>
        <begin position="1"/>
        <end position="185"/>
    </location>
</feature>
<feature type="transmembrane region" description="Helical" evidence="2">
    <location>
        <begin position="28"/>
        <end position="48"/>
    </location>
</feature>
<feature type="zinc finger region" description="RING-type; atypical" evidence="3">
    <location>
        <begin position="104"/>
        <end position="146"/>
    </location>
</feature>
<feature type="region of interest" description="Disordered" evidence="4">
    <location>
        <begin position="161"/>
        <end position="185"/>
    </location>
</feature>
<feature type="compositionally biased region" description="Basic and acidic residues" evidence="4">
    <location>
        <begin position="170"/>
        <end position="185"/>
    </location>
</feature>
<feature type="sequence conflict" description="In Ref. 5; AAM63811." evidence="5" ref="5">
    <original>LP</original>
    <variation>FL</variation>
    <location>
        <begin position="184"/>
        <end position="185"/>
    </location>
</feature>
<reference key="1">
    <citation type="journal article" date="2000" name="Nature">
        <title>Sequence and analysis of chromosome 1 of the plant Arabidopsis thaliana.</title>
        <authorList>
            <person name="Theologis A."/>
            <person name="Ecker J.R."/>
            <person name="Palm C.J."/>
            <person name="Federspiel N.A."/>
            <person name="Kaul S."/>
            <person name="White O."/>
            <person name="Alonso J."/>
            <person name="Altafi H."/>
            <person name="Araujo R."/>
            <person name="Bowman C.L."/>
            <person name="Brooks S.Y."/>
            <person name="Buehler E."/>
            <person name="Chan A."/>
            <person name="Chao Q."/>
            <person name="Chen H."/>
            <person name="Cheuk R.F."/>
            <person name="Chin C.W."/>
            <person name="Chung M.K."/>
            <person name="Conn L."/>
            <person name="Conway A.B."/>
            <person name="Conway A.R."/>
            <person name="Creasy T.H."/>
            <person name="Dewar K."/>
            <person name="Dunn P."/>
            <person name="Etgu P."/>
            <person name="Feldblyum T.V."/>
            <person name="Feng J.-D."/>
            <person name="Fong B."/>
            <person name="Fujii C.Y."/>
            <person name="Gill J.E."/>
            <person name="Goldsmith A.D."/>
            <person name="Haas B."/>
            <person name="Hansen N.F."/>
            <person name="Hughes B."/>
            <person name="Huizar L."/>
            <person name="Hunter J.L."/>
            <person name="Jenkins J."/>
            <person name="Johnson-Hopson C."/>
            <person name="Khan S."/>
            <person name="Khaykin E."/>
            <person name="Kim C.J."/>
            <person name="Koo H.L."/>
            <person name="Kremenetskaia I."/>
            <person name="Kurtz D.B."/>
            <person name="Kwan A."/>
            <person name="Lam B."/>
            <person name="Langin-Hooper S."/>
            <person name="Lee A."/>
            <person name="Lee J.M."/>
            <person name="Lenz C.A."/>
            <person name="Li J.H."/>
            <person name="Li Y.-P."/>
            <person name="Lin X."/>
            <person name="Liu S.X."/>
            <person name="Liu Z.A."/>
            <person name="Luros J.S."/>
            <person name="Maiti R."/>
            <person name="Marziali A."/>
            <person name="Militscher J."/>
            <person name="Miranda M."/>
            <person name="Nguyen M."/>
            <person name="Nierman W.C."/>
            <person name="Osborne B.I."/>
            <person name="Pai G."/>
            <person name="Peterson J."/>
            <person name="Pham P.K."/>
            <person name="Rizzo M."/>
            <person name="Rooney T."/>
            <person name="Rowley D."/>
            <person name="Sakano H."/>
            <person name="Salzberg S.L."/>
            <person name="Schwartz J.R."/>
            <person name="Shinn P."/>
            <person name="Southwick A.M."/>
            <person name="Sun H."/>
            <person name="Tallon L.J."/>
            <person name="Tambunga G."/>
            <person name="Toriumi M.J."/>
            <person name="Town C.D."/>
            <person name="Utterback T."/>
            <person name="Van Aken S."/>
            <person name="Vaysberg M."/>
            <person name="Vysotskaia V.S."/>
            <person name="Walker M."/>
            <person name="Wu D."/>
            <person name="Yu G."/>
            <person name="Fraser C.M."/>
            <person name="Venter J.C."/>
            <person name="Davis R.W."/>
        </authorList>
    </citation>
    <scope>NUCLEOTIDE SEQUENCE [LARGE SCALE GENOMIC DNA]</scope>
    <source>
        <strain>cv. Columbia</strain>
    </source>
</reference>
<reference key="2">
    <citation type="journal article" date="2017" name="Plant J.">
        <title>Araport11: a complete reannotation of the Arabidopsis thaliana reference genome.</title>
        <authorList>
            <person name="Cheng C.Y."/>
            <person name="Krishnakumar V."/>
            <person name="Chan A.P."/>
            <person name="Thibaud-Nissen F."/>
            <person name="Schobel S."/>
            <person name="Town C.D."/>
        </authorList>
    </citation>
    <scope>GENOME REANNOTATION</scope>
    <source>
        <strain>cv. Columbia</strain>
    </source>
</reference>
<reference key="3">
    <citation type="journal article" date="2002" name="Science">
        <title>Functional annotation of a full-length Arabidopsis cDNA collection.</title>
        <authorList>
            <person name="Seki M."/>
            <person name="Narusaka M."/>
            <person name="Kamiya A."/>
            <person name="Ishida J."/>
            <person name="Satou M."/>
            <person name="Sakurai T."/>
            <person name="Nakajima M."/>
            <person name="Enju A."/>
            <person name="Akiyama K."/>
            <person name="Oono Y."/>
            <person name="Muramatsu M."/>
            <person name="Hayashizaki Y."/>
            <person name="Kawai J."/>
            <person name="Carninci P."/>
            <person name="Itoh M."/>
            <person name="Ishii Y."/>
            <person name="Arakawa T."/>
            <person name="Shibata K."/>
            <person name="Shinagawa A."/>
            <person name="Shinozaki K."/>
        </authorList>
    </citation>
    <scope>NUCLEOTIDE SEQUENCE [LARGE SCALE MRNA]</scope>
    <source>
        <strain>cv. Columbia</strain>
    </source>
</reference>
<reference key="4">
    <citation type="journal article" date="2003" name="Science">
        <title>Empirical analysis of transcriptional activity in the Arabidopsis genome.</title>
        <authorList>
            <person name="Yamada K."/>
            <person name="Lim J."/>
            <person name="Dale J.M."/>
            <person name="Chen H."/>
            <person name="Shinn P."/>
            <person name="Palm C.J."/>
            <person name="Southwick A.M."/>
            <person name="Wu H.C."/>
            <person name="Kim C.J."/>
            <person name="Nguyen M."/>
            <person name="Pham P.K."/>
            <person name="Cheuk R.F."/>
            <person name="Karlin-Newmann G."/>
            <person name="Liu S.X."/>
            <person name="Lam B."/>
            <person name="Sakano H."/>
            <person name="Wu T."/>
            <person name="Yu G."/>
            <person name="Miranda M."/>
            <person name="Quach H.L."/>
            <person name="Tripp M."/>
            <person name="Chang C.H."/>
            <person name="Lee J.M."/>
            <person name="Toriumi M.J."/>
            <person name="Chan M.M."/>
            <person name="Tang C.C."/>
            <person name="Onodera C.S."/>
            <person name="Deng J.M."/>
            <person name="Akiyama K."/>
            <person name="Ansari Y."/>
            <person name="Arakawa T."/>
            <person name="Banh J."/>
            <person name="Banno F."/>
            <person name="Bowser L."/>
            <person name="Brooks S.Y."/>
            <person name="Carninci P."/>
            <person name="Chao Q."/>
            <person name="Choy N."/>
            <person name="Enju A."/>
            <person name="Goldsmith A.D."/>
            <person name="Gurjal M."/>
            <person name="Hansen N.F."/>
            <person name="Hayashizaki Y."/>
            <person name="Johnson-Hopson C."/>
            <person name="Hsuan V.W."/>
            <person name="Iida K."/>
            <person name="Karnes M."/>
            <person name="Khan S."/>
            <person name="Koesema E."/>
            <person name="Ishida J."/>
            <person name="Jiang P.X."/>
            <person name="Jones T."/>
            <person name="Kawai J."/>
            <person name="Kamiya A."/>
            <person name="Meyers C."/>
            <person name="Nakajima M."/>
            <person name="Narusaka M."/>
            <person name="Seki M."/>
            <person name="Sakurai T."/>
            <person name="Satou M."/>
            <person name="Tamse R."/>
            <person name="Vaysberg M."/>
            <person name="Wallender E.K."/>
            <person name="Wong C."/>
            <person name="Yamamura Y."/>
            <person name="Yuan S."/>
            <person name="Shinozaki K."/>
            <person name="Davis R.W."/>
            <person name="Theologis A."/>
            <person name="Ecker J.R."/>
        </authorList>
    </citation>
    <scope>NUCLEOTIDE SEQUENCE [LARGE SCALE MRNA]</scope>
    <source>
        <strain>cv. Columbia</strain>
    </source>
</reference>
<reference key="5">
    <citation type="submission" date="2002-03" db="EMBL/GenBank/DDBJ databases">
        <title>Full-length cDNA from Arabidopsis thaliana.</title>
        <authorList>
            <person name="Brover V.V."/>
            <person name="Troukhan M.E."/>
            <person name="Alexandrov N.A."/>
            <person name="Lu Y.-P."/>
            <person name="Flavell R.B."/>
            <person name="Feldmann K.A."/>
        </authorList>
    </citation>
    <scope>NUCLEOTIDE SEQUENCE [LARGE SCALE MRNA]</scope>
</reference>
<reference key="6">
    <citation type="journal article" date="2002" name="Genome Biol.">
        <title>Evaluation and classification of RING-finger domains encoded by the Arabidopsis genome.</title>
        <authorList>
            <person name="Kosarev P."/>
            <person name="Mayer K.F.X."/>
            <person name="Hardtke C.S."/>
        </authorList>
    </citation>
    <scope>GENE FAMILY ORGANIZATION</scope>
</reference>
<reference key="7">
    <citation type="journal article" date="2004" name="Genetics">
        <title>Isolation and gene expression analysis of Arabidopsis thaliana mutants with constitutive expression of ATL2, an early elicitor-response RING-H2 zinc-finger gene.</title>
        <authorList>
            <person name="Serrano M."/>
            <person name="Guzman P."/>
        </authorList>
    </citation>
    <scope>IDENTIFICATION</scope>
</reference>
<reference key="8">
    <citation type="journal article" date="2006" name="J. Mol. Evol.">
        <title>The ATL gene family from Arabidopsis thaliana and Oryza sativa comprises a large number of putative ubiquitin ligases of the RING-H2 type.</title>
        <authorList>
            <person name="Serrano M."/>
            <person name="Parra S."/>
            <person name="Alcaraz L.D."/>
            <person name="Guzman P."/>
        </authorList>
    </citation>
    <scope>NOMENCLATURE</scope>
    <scope>GENE FAMILY ORGANIZATION</scope>
</reference>
<comment type="catalytic activity">
    <reaction evidence="5">
        <text>S-ubiquitinyl-[E2 ubiquitin-conjugating enzyme]-L-cysteine + [acceptor protein]-L-lysine = [E2 ubiquitin-conjugating enzyme]-L-cysteine + N(6)-ubiquitinyl-[acceptor protein]-L-lysine.</text>
        <dbReference type="EC" id="2.3.2.27"/>
    </reaction>
</comment>
<comment type="pathway">
    <text>Protein modification; protein ubiquitination.</text>
</comment>
<comment type="subcellular location">
    <subcellularLocation>
        <location evidence="5">Membrane</location>
        <topology evidence="5">Single-pass membrane protein</topology>
    </subcellularLocation>
</comment>
<comment type="domain">
    <text evidence="1">The RING-type zinc finger domain mediates binding to an E2 ubiquitin-conjugating enzyme.</text>
</comment>
<comment type="similarity">
    <text evidence="5">Belongs to the RING-type zinc finger family. ATL subfamily.</text>
</comment>
<gene>
    <name type="primary">ATL8</name>
    <name type="ordered locus">At1g76410</name>
    <name type="ORF">F14G6.1</name>
    <name type="ORF">F15M4.9</name>
</gene>
<dbReference type="EC" id="2.3.2.27" evidence="5"/>
<dbReference type="EMBL" id="AC012394">
    <property type="protein sequence ID" value="AAF16660.1"/>
    <property type="molecule type" value="Genomic_DNA"/>
</dbReference>
<dbReference type="EMBL" id="AC015450">
    <property type="protein sequence ID" value="AAG51946.1"/>
    <property type="molecule type" value="Genomic_DNA"/>
</dbReference>
<dbReference type="EMBL" id="CP002684">
    <property type="protein sequence ID" value="AEE35838.1"/>
    <property type="molecule type" value="Genomic_DNA"/>
</dbReference>
<dbReference type="EMBL" id="AK118893">
    <property type="protein sequence ID" value="BAC43477.1"/>
    <property type="molecule type" value="mRNA"/>
</dbReference>
<dbReference type="EMBL" id="BT005559">
    <property type="protein sequence ID" value="AAO63979.1"/>
    <property type="molecule type" value="mRNA"/>
</dbReference>
<dbReference type="EMBL" id="AY086760">
    <property type="protein sequence ID" value="AAM63811.1"/>
    <property type="molecule type" value="mRNA"/>
</dbReference>
<dbReference type="PIR" id="G96791">
    <property type="entry name" value="G96791"/>
</dbReference>
<dbReference type="RefSeq" id="NP_177767.1">
    <property type="nucleotide sequence ID" value="NM_106291.3"/>
</dbReference>
<dbReference type="SMR" id="Q8LC69"/>
<dbReference type="STRING" id="3702.Q8LC69"/>
<dbReference type="PaxDb" id="3702-AT1G76410.1"/>
<dbReference type="ProteomicsDB" id="246652"/>
<dbReference type="EnsemblPlants" id="AT1G76410.1">
    <property type="protein sequence ID" value="AT1G76410.1"/>
    <property type="gene ID" value="AT1G76410"/>
</dbReference>
<dbReference type="GeneID" id="843974"/>
<dbReference type="Gramene" id="AT1G76410.1">
    <property type="protein sequence ID" value="AT1G76410.1"/>
    <property type="gene ID" value="AT1G76410"/>
</dbReference>
<dbReference type="KEGG" id="ath:AT1G76410"/>
<dbReference type="Araport" id="AT1G76410"/>
<dbReference type="TAIR" id="AT1G76410">
    <property type="gene designation" value="ATL8"/>
</dbReference>
<dbReference type="eggNOG" id="KOG0800">
    <property type="taxonomic scope" value="Eukaryota"/>
</dbReference>
<dbReference type="HOGENOM" id="CLU_013137_9_1_1"/>
<dbReference type="InParanoid" id="Q8LC69"/>
<dbReference type="OMA" id="CAWLRRI"/>
<dbReference type="PhylomeDB" id="Q8LC69"/>
<dbReference type="UniPathway" id="UPA00143"/>
<dbReference type="PRO" id="PR:Q8LC69"/>
<dbReference type="Proteomes" id="UP000006548">
    <property type="component" value="Chromosome 1"/>
</dbReference>
<dbReference type="ExpressionAtlas" id="Q8LC69">
    <property type="expression patterns" value="baseline and differential"/>
</dbReference>
<dbReference type="GO" id="GO:0016020">
    <property type="term" value="C:membrane"/>
    <property type="evidence" value="ECO:0007669"/>
    <property type="project" value="UniProtKB-SubCell"/>
</dbReference>
<dbReference type="GO" id="GO:0016740">
    <property type="term" value="F:transferase activity"/>
    <property type="evidence" value="ECO:0007669"/>
    <property type="project" value="UniProtKB-KW"/>
</dbReference>
<dbReference type="GO" id="GO:0008270">
    <property type="term" value="F:zinc ion binding"/>
    <property type="evidence" value="ECO:0007669"/>
    <property type="project" value="UniProtKB-KW"/>
</dbReference>
<dbReference type="GO" id="GO:0016567">
    <property type="term" value="P:protein ubiquitination"/>
    <property type="evidence" value="ECO:0007669"/>
    <property type="project" value="UniProtKB-UniPathway"/>
</dbReference>
<dbReference type="CDD" id="cd16461">
    <property type="entry name" value="RING-H2_EL5-like"/>
    <property type="match status" value="1"/>
</dbReference>
<dbReference type="FunFam" id="3.30.40.10:FF:000187">
    <property type="entry name" value="E3 ubiquitin-protein ligase ATL6"/>
    <property type="match status" value="1"/>
</dbReference>
<dbReference type="Gene3D" id="3.30.40.10">
    <property type="entry name" value="Zinc/RING finger domain, C3HC4 (zinc finger)"/>
    <property type="match status" value="1"/>
</dbReference>
<dbReference type="InterPro" id="IPR052788">
    <property type="entry name" value="RING-type_E3_ligase_ATL"/>
</dbReference>
<dbReference type="InterPro" id="IPR001841">
    <property type="entry name" value="Znf_RING"/>
</dbReference>
<dbReference type="InterPro" id="IPR013083">
    <property type="entry name" value="Znf_RING/FYVE/PHD"/>
</dbReference>
<dbReference type="PANTHER" id="PTHR45798">
    <property type="entry name" value="RING-H2 FINGER PROTEIN ATL61-RELATED-RELATED"/>
    <property type="match status" value="1"/>
</dbReference>
<dbReference type="PANTHER" id="PTHR45798:SF101">
    <property type="entry name" value="RING-H2 FINGER PROTEIN ATL8-RELATED"/>
    <property type="match status" value="1"/>
</dbReference>
<dbReference type="Pfam" id="PF13639">
    <property type="entry name" value="zf-RING_2"/>
    <property type="match status" value="1"/>
</dbReference>
<dbReference type="SMART" id="SM00184">
    <property type="entry name" value="RING"/>
    <property type="match status" value="1"/>
</dbReference>
<dbReference type="SUPFAM" id="SSF57850">
    <property type="entry name" value="RING/U-box"/>
    <property type="match status" value="1"/>
</dbReference>
<dbReference type="PROSITE" id="PS50089">
    <property type="entry name" value="ZF_RING_2"/>
    <property type="match status" value="1"/>
</dbReference>
<organism>
    <name type="scientific">Arabidopsis thaliana</name>
    <name type="common">Mouse-ear cress</name>
    <dbReference type="NCBI Taxonomy" id="3702"/>
    <lineage>
        <taxon>Eukaryota</taxon>
        <taxon>Viridiplantae</taxon>
        <taxon>Streptophyta</taxon>
        <taxon>Embryophyta</taxon>
        <taxon>Tracheophyta</taxon>
        <taxon>Spermatophyta</taxon>
        <taxon>Magnoliopsida</taxon>
        <taxon>eudicotyledons</taxon>
        <taxon>Gunneridae</taxon>
        <taxon>Pentapetalae</taxon>
        <taxon>rosids</taxon>
        <taxon>malvids</taxon>
        <taxon>Brassicales</taxon>
        <taxon>Brassicaceae</taxon>
        <taxon>Camelineae</taxon>
        <taxon>Arabidopsis</taxon>
    </lineage>
</organism>
<evidence type="ECO:0000250" key="1"/>
<evidence type="ECO:0000255" key="2"/>
<evidence type="ECO:0000255" key="3">
    <source>
        <dbReference type="PROSITE-ProRule" id="PRU00175"/>
    </source>
</evidence>
<evidence type="ECO:0000256" key="4">
    <source>
        <dbReference type="SAM" id="MobiDB-lite"/>
    </source>
</evidence>
<evidence type="ECO:0000305" key="5"/>
<name>ATL8_ARATH</name>
<sequence length="185" mass="19919">MARLLFRLLQEANSTSPAEASPPFNSDLVLILAVLLCALTCIIGLIAVSRCAWLRRIASRNRSDQTHPPPVAAANKGLKKKVLRSLPKLTYSPDSPPAEKLVECAICLTEFAAGDELRVLPQCGHGFHVSCIDTWLGSHSSCPSCRQILVVTRCHKCGGLPGSSSSGPEPDTRIKQREDGPDNLP</sequence>
<proteinExistence type="evidence at transcript level"/>
<protein>
    <recommendedName>
        <fullName>RING-H2 finger protein ATL8</fullName>
        <ecNumber evidence="5">2.3.2.27</ecNumber>
    </recommendedName>
    <alternativeName>
        <fullName evidence="5">RING-type E3 ubiquitin transferase ATL8</fullName>
    </alternativeName>
</protein>